<accession>Q5AX00</accession>
<accession>C8VD42</accession>
<accession>Q1HFR8</accession>
<proteinExistence type="evidence at transcript level"/>
<keyword id="KW-1015">Disulfide bond</keyword>
<keyword id="KW-0378">Hydrolase</keyword>
<keyword id="KW-1185">Reference proteome</keyword>
<keyword id="KW-0964">Secreted</keyword>
<keyword id="KW-0719">Serine esterase</keyword>
<keyword id="KW-0732">Signal</keyword>
<sequence length="221" mass="23074">MRFHTILLAALASLVIATPLPSDTDVSLERRQSMNSNDLEKGDCKSVAFIFARGSTEIGNMGFVVGPGVCSNLKSTLGSDKVACQGVGGAYTAGLIQNALPANTDSGSIKEAVKMFDLAAKCPDTQIVAGGYSQGSAVIDNAIQKLDDSTRDRVKGVVLFGFTRNLQDKGQIPGYPKDQTKVYCAVGDLVCSGTLIITASHMTYGLNAGDAAKFLASQVSV</sequence>
<reference key="1">
    <citation type="journal article" date="2006" name="Proc. Natl. Acad. Sci. U.S.A.">
        <title>Development and application of a suite of polysaccharide-degrading enzymes for analyzing plant cell walls.</title>
        <authorList>
            <person name="Bauer S."/>
            <person name="Vasu P."/>
            <person name="Persson S."/>
            <person name="Mort A.J."/>
            <person name="Somerville C.R."/>
        </authorList>
    </citation>
    <scope>NUCLEOTIDE SEQUENCE [MRNA]</scope>
    <scope>FUNCTION</scope>
    <source>
        <strain>FGSC A4 / ATCC 38163 / CBS 112.46 / NRRL 194 / M139</strain>
    </source>
</reference>
<reference key="2">
    <citation type="journal article" date="2005" name="Nature">
        <title>Sequencing of Aspergillus nidulans and comparative analysis with A. fumigatus and A. oryzae.</title>
        <authorList>
            <person name="Galagan J.E."/>
            <person name="Calvo S.E."/>
            <person name="Cuomo C."/>
            <person name="Ma L.-J."/>
            <person name="Wortman J.R."/>
            <person name="Batzoglou S."/>
            <person name="Lee S.-I."/>
            <person name="Bastuerkmen M."/>
            <person name="Spevak C.C."/>
            <person name="Clutterbuck J."/>
            <person name="Kapitonov V."/>
            <person name="Jurka J."/>
            <person name="Scazzocchio C."/>
            <person name="Farman M.L."/>
            <person name="Butler J."/>
            <person name="Purcell S."/>
            <person name="Harris S."/>
            <person name="Braus G.H."/>
            <person name="Draht O."/>
            <person name="Busch S."/>
            <person name="D'Enfert C."/>
            <person name="Bouchier C."/>
            <person name="Goldman G.H."/>
            <person name="Bell-Pedersen D."/>
            <person name="Griffiths-Jones S."/>
            <person name="Doonan J.H."/>
            <person name="Yu J."/>
            <person name="Vienken K."/>
            <person name="Pain A."/>
            <person name="Freitag M."/>
            <person name="Selker E.U."/>
            <person name="Archer D.B."/>
            <person name="Penalva M.A."/>
            <person name="Oakley B.R."/>
            <person name="Momany M."/>
            <person name="Tanaka T."/>
            <person name="Kumagai T."/>
            <person name="Asai K."/>
            <person name="Machida M."/>
            <person name="Nierman W.C."/>
            <person name="Denning D.W."/>
            <person name="Caddick M.X."/>
            <person name="Hynes M."/>
            <person name="Paoletti M."/>
            <person name="Fischer R."/>
            <person name="Miller B.L."/>
            <person name="Dyer P.S."/>
            <person name="Sachs M.S."/>
            <person name="Osmani S.A."/>
            <person name="Birren B.W."/>
        </authorList>
    </citation>
    <scope>NUCLEOTIDE SEQUENCE [LARGE SCALE GENOMIC DNA]</scope>
    <source>
        <strain>FGSC A4 / ATCC 38163 / CBS 112.46 / NRRL 194 / M139</strain>
    </source>
</reference>
<reference key="3">
    <citation type="journal article" date="2009" name="Fungal Genet. Biol.">
        <title>The 2008 update of the Aspergillus nidulans genome annotation: a community effort.</title>
        <authorList>
            <person name="Wortman J.R."/>
            <person name="Gilsenan J.M."/>
            <person name="Joardar V."/>
            <person name="Deegan J."/>
            <person name="Clutterbuck J."/>
            <person name="Andersen M.R."/>
            <person name="Archer D."/>
            <person name="Bencina M."/>
            <person name="Braus G."/>
            <person name="Coutinho P."/>
            <person name="von Dohren H."/>
            <person name="Doonan J."/>
            <person name="Driessen A.J."/>
            <person name="Durek P."/>
            <person name="Espeso E."/>
            <person name="Fekete E."/>
            <person name="Flipphi M."/>
            <person name="Estrada C.G."/>
            <person name="Geysens S."/>
            <person name="Goldman G."/>
            <person name="de Groot P.W."/>
            <person name="Hansen K."/>
            <person name="Harris S.D."/>
            <person name="Heinekamp T."/>
            <person name="Helmstaedt K."/>
            <person name="Henrissat B."/>
            <person name="Hofmann G."/>
            <person name="Homan T."/>
            <person name="Horio T."/>
            <person name="Horiuchi H."/>
            <person name="James S."/>
            <person name="Jones M."/>
            <person name="Karaffa L."/>
            <person name="Karanyi Z."/>
            <person name="Kato M."/>
            <person name="Keller N."/>
            <person name="Kelly D.E."/>
            <person name="Kiel J.A."/>
            <person name="Kim J.M."/>
            <person name="van der Klei I.J."/>
            <person name="Klis F.M."/>
            <person name="Kovalchuk A."/>
            <person name="Krasevec N."/>
            <person name="Kubicek C.P."/>
            <person name="Liu B."/>
            <person name="Maccabe A."/>
            <person name="Meyer V."/>
            <person name="Mirabito P."/>
            <person name="Miskei M."/>
            <person name="Mos M."/>
            <person name="Mullins J."/>
            <person name="Nelson D.R."/>
            <person name="Nielsen J."/>
            <person name="Oakley B.R."/>
            <person name="Osmani S.A."/>
            <person name="Pakula T."/>
            <person name="Paszewski A."/>
            <person name="Paulsen I."/>
            <person name="Pilsyk S."/>
            <person name="Pocsi I."/>
            <person name="Punt P.J."/>
            <person name="Ram A.F."/>
            <person name="Ren Q."/>
            <person name="Robellet X."/>
            <person name="Robson G."/>
            <person name="Seiboth B."/>
            <person name="van Solingen P."/>
            <person name="Specht T."/>
            <person name="Sun J."/>
            <person name="Taheri-Talesh N."/>
            <person name="Takeshita N."/>
            <person name="Ussery D."/>
            <person name="vanKuyk P.A."/>
            <person name="Visser H."/>
            <person name="van de Vondervoort P.J."/>
            <person name="de Vries R.P."/>
            <person name="Walton J."/>
            <person name="Xiang X."/>
            <person name="Xiong Y."/>
            <person name="Zeng A.P."/>
            <person name="Brandt B.W."/>
            <person name="Cornell M.J."/>
            <person name="van den Hondel C.A."/>
            <person name="Visser J."/>
            <person name="Oliver S.G."/>
            <person name="Turner G."/>
        </authorList>
    </citation>
    <scope>GENOME REANNOTATION</scope>
    <source>
        <strain>FGSC A4 / ATCC 38163 / CBS 112.46 / NRRL 194 / M139</strain>
    </source>
</reference>
<reference key="4">
    <citation type="journal article" date="2019" name="Appl. Microbiol. Biotechnol.">
        <title>Regulation of the cutinases expressed by Aspergillus nidulans and evaluation of their role in cutin degradation.</title>
        <authorList>
            <person name="Bermudez-Garcia E."/>
            <person name="Pena-Montes C."/>
            <person name="Martins I."/>
            <person name="Pais J."/>
            <person name="Pereira C.S."/>
            <person name="Sanchez S."/>
            <person name="Farres A."/>
        </authorList>
    </citation>
    <scope>INDUCTION</scope>
</reference>
<dbReference type="EC" id="3.1.1.74" evidence="7 8"/>
<dbReference type="EMBL" id="DQ490506">
    <property type="protein sequence ID" value="ABF50882.1"/>
    <property type="molecule type" value="mRNA"/>
</dbReference>
<dbReference type="EMBL" id="AACD01000122">
    <property type="protein sequence ID" value="EAA61432.1"/>
    <property type="molecule type" value="Genomic_DNA"/>
</dbReference>
<dbReference type="EMBL" id="BN001304">
    <property type="protein sequence ID" value="CBF78915.1"/>
    <property type="molecule type" value="Genomic_DNA"/>
</dbReference>
<dbReference type="RefSeq" id="XP_664784.1">
    <property type="nucleotide sequence ID" value="XM_659692.1"/>
</dbReference>
<dbReference type="SMR" id="Q5AX00"/>
<dbReference type="ESTHER" id="emeni-CUTI3">
    <property type="family name" value="Cutinase"/>
</dbReference>
<dbReference type="EnsemblFungi" id="CBF78915">
    <property type="protein sequence ID" value="CBF78915"/>
    <property type="gene ID" value="ANIA_07180"/>
</dbReference>
<dbReference type="KEGG" id="ani:ANIA_07180"/>
<dbReference type="VEuPathDB" id="FungiDB:AN7180"/>
<dbReference type="eggNOG" id="ENOG502SI38">
    <property type="taxonomic scope" value="Eukaryota"/>
</dbReference>
<dbReference type="HOGENOM" id="CLU_040058_2_0_1"/>
<dbReference type="InParanoid" id="Q5AX00"/>
<dbReference type="OMA" id="PPVIFIY"/>
<dbReference type="OrthoDB" id="3225429at2759"/>
<dbReference type="Proteomes" id="UP000000560">
    <property type="component" value="Chromosome IV"/>
</dbReference>
<dbReference type="GO" id="GO:0005576">
    <property type="term" value="C:extracellular region"/>
    <property type="evidence" value="ECO:0007669"/>
    <property type="project" value="UniProtKB-SubCell"/>
</dbReference>
<dbReference type="GO" id="GO:0050525">
    <property type="term" value="F:cutinase activity"/>
    <property type="evidence" value="ECO:0000314"/>
    <property type="project" value="UniProtKB"/>
</dbReference>
<dbReference type="GO" id="GO:0016052">
    <property type="term" value="P:carbohydrate catabolic process"/>
    <property type="evidence" value="ECO:0000314"/>
    <property type="project" value="UniProtKB"/>
</dbReference>
<dbReference type="FunFam" id="3.40.50.1820:FF:000235">
    <property type="entry name" value="Cutinase 1"/>
    <property type="match status" value="1"/>
</dbReference>
<dbReference type="Gene3D" id="3.40.50.1820">
    <property type="entry name" value="alpha/beta hydrolase"/>
    <property type="match status" value="1"/>
</dbReference>
<dbReference type="InterPro" id="IPR029058">
    <property type="entry name" value="AB_hydrolase_fold"/>
</dbReference>
<dbReference type="InterPro" id="IPR000675">
    <property type="entry name" value="Cutinase/axe"/>
</dbReference>
<dbReference type="InterPro" id="IPR043580">
    <property type="entry name" value="CUTINASE_1"/>
</dbReference>
<dbReference type="InterPro" id="IPR043579">
    <property type="entry name" value="CUTINASE_2"/>
</dbReference>
<dbReference type="InterPro" id="IPR011150">
    <property type="entry name" value="Cutinase_monf"/>
</dbReference>
<dbReference type="PANTHER" id="PTHR48250:SF3">
    <property type="entry name" value="CUTINASE 1-RELATED"/>
    <property type="match status" value="1"/>
</dbReference>
<dbReference type="PANTHER" id="PTHR48250">
    <property type="entry name" value="CUTINASE 2-RELATED"/>
    <property type="match status" value="1"/>
</dbReference>
<dbReference type="Pfam" id="PF01083">
    <property type="entry name" value="Cutinase"/>
    <property type="match status" value="1"/>
</dbReference>
<dbReference type="PRINTS" id="PR00129">
    <property type="entry name" value="CUTINASE"/>
</dbReference>
<dbReference type="SMART" id="SM01110">
    <property type="entry name" value="Cutinase"/>
    <property type="match status" value="1"/>
</dbReference>
<dbReference type="SUPFAM" id="SSF53474">
    <property type="entry name" value="alpha/beta-Hydrolases"/>
    <property type="match status" value="1"/>
</dbReference>
<dbReference type="PROSITE" id="PS00155">
    <property type="entry name" value="CUTINASE_1"/>
    <property type="match status" value="1"/>
</dbReference>
<dbReference type="PROSITE" id="PS00931">
    <property type="entry name" value="CUTINASE_2"/>
    <property type="match status" value="1"/>
</dbReference>
<organism>
    <name type="scientific">Emericella nidulans (strain FGSC A4 / ATCC 38163 / CBS 112.46 / NRRL 194 / M139)</name>
    <name type="common">Aspergillus nidulans</name>
    <dbReference type="NCBI Taxonomy" id="227321"/>
    <lineage>
        <taxon>Eukaryota</taxon>
        <taxon>Fungi</taxon>
        <taxon>Dikarya</taxon>
        <taxon>Ascomycota</taxon>
        <taxon>Pezizomycotina</taxon>
        <taxon>Eurotiomycetes</taxon>
        <taxon>Eurotiomycetidae</taxon>
        <taxon>Eurotiales</taxon>
        <taxon>Aspergillaceae</taxon>
        <taxon>Aspergillus</taxon>
        <taxon>Aspergillus subgen. Nidulantes</taxon>
    </lineage>
</organism>
<protein>
    <recommendedName>
        <fullName evidence="11">Cutinase 3</fullName>
        <ecNumber evidence="7 8">3.1.1.74</ecNumber>
    </recommendedName>
    <alternativeName>
        <fullName evidence="11">Ancut3</fullName>
    </alternativeName>
    <alternativeName>
        <fullName>Cutin hydrolase 3</fullName>
    </alternativeName>
</protein>
<comment type="function">
    <text evidence="4 5 9">Catalyzes the hydrolysis of complex carboxylic polyesters found in the cell wall of plants (PubMed:16844780). Degrades cutin, a macromolecule that forms the structure of the plant cuticle (By similarity). Also degrades suberin, a specialized macromolecule found in the cell wall of various plant tissues (By similarity).</text>
</comment>
<comment type="catalytic activity">
    <reaction evidence="7 8">
        <text>cutin + H2O = cutin monomers.</text>
        <dbReference type="EC" id="3.1.1.74"/>
    </reaction>
</comment>
<comment type="subcellular location">
    <subcellularLocation>
        <location evidence="2">Secreted</location>
    </subcellularLocation>
</comment>
<comment type="induction">
    <text evidence="10">Constitutively expressed in a manner dependent on transcription factor FarB: levels are unaffected by varying lipidic or non-lipidic carbon source, or by oxidative stress.</text>
</comment>
<comment type="similarity">
    <text evidence="12">Belongs to the cutinase family.</text>
</comment>
<evidence type="ECO:0000250" key="1">
    <source>
        <dbReference type="UniProtKB" id="P00590"/>
    </source>
</evidence>
<evidence type="ECO:0000250" key="2">
    <source>
        <dbReference type="UniProtKB" id="P11373"/>
    </source>
</evidence>
<evidence type="ECO:0000250" key="3">
    <source>
        <dbReference type="UniProtKB" id="P52956"/>
    </source>
</evidence>
<evidence type="ECO:0000250" key="4">
    <source>
        <dbReference type="UniProtKB" id="Q5AVY9"/>
    </source>
</evidence>
<evidence type="ECO:0000250" key="5">
    <source>
        <dbReference type="UniProtKB" id="Q5B2C1"/>
    </source>
</evidence>
<evidence type="ECO:0000255" key="6"/>
<evidence type="ECO:0000255" key="7">
    <source>
        <dbReference type="PROSITE-ProRule" id="PRU10108"/>
    </source>
</evidence>
<evidence type="ECO:0000255" key="8">
    <source>
        <dbReference type="PROSITE-ProRule" id="PRU10109"/>
    </source>
</evidence>
<evidence type="ECO:0000269" key="9">
    <source>
    </source>
</evidence>
<evidence type="ECO:0000269" key="10">
    <source>
    </source>
</evidence>
<evidence type="ECO:0000303" key="11">
    <source>
    </source>
</evidence>
<evidence type="ECO:0000305" key="12"/>
<feature type="signal peptide" evidence="6">
    <location>
        <begin position="1"/>
        <end position="17"/>
    </location>
</feature>
<feature type="chain" id="PRO_0000395262" description="Cutinase 3">
    <location>
        <begin position="18"/>
        <end position="221"/>
    </location>
</feature>
<feature type="active site" description="Nucleophile" evidence="1">
    <location>
        <position position="133"/>
    </location>
</feature>
<feature type="active site" evidence="1">
    <location>
        <position position="188"/>
    </location>
</feature>
<feature type="active site" description="Proton donor/acceptor" evidence="1">
    <location>
        <position position="201"/>
    </location>
</feature>
<feature type="site" description="Transition state stabilizer" evidence="1">
    <location>
        <position position="55"/>
    </location>
</feature>
<feature type="site" description="Transition state stabilizer" evidence="1">
    <location>
        <position position="134"/>
    </location>
</feature>
<feature type="disulfide bond" evidence="3">
    <location>
        <begin position="44"/>
        <end position="122"/>
    </location>
</feature>
<feature type="disulfide bond" evidence="3">
    <location>
        <begin position="70"/>
        <end position="84"/>
    </location>
</feature>
<feature type="disulfide bond" evidence="3">
    <location>
        <begin position="184"/>
        <end position="191"/>
    </location>
</feature>
<gene>
    <name evidence="11" type="primary">cut3</name>
    <name type="ORF">AN7180</name>
</gene>
<name>CUTI3_EMENI</name>